<evidence type="ECO:0000255" key="1">
    <source>
        <dbReference type="HAMAP-Rule" id="MF_01083"/>
    </source>
</evidence>
<keyword id="KW-0223">Dioxygenase</keyword>
<keyword id="KW-0408">Iron</keyword>
<keyword id="KW-0479">Metal-binding</keyword>
<keyword id="KW-0560">Oxidoreductase</keyword>
<organism>
    <name type="scientific">Salmonella paratyphi B (strain ATCC BAA-1250 / SPB7)</name>
    <dbReference type="NCBI Taxonomy" id="1016998"/>
    <lineage>
        <taxon>Bacteria</taxon>
        <taxon>Pseudomonadati</taxon>
        <taxon>Pseudomonadota</taxon>
        <taxon>Gammaproteobacteria</taxon>
        <taxon>Enterobacterales</taxon>
        <taxon>Enterobacteriaceae</taxon>
        <taxon>Salmonella</taxon>
    </lineage>
</organism>
<protein>
    <recommendedName>
        <fullName evidence="1">Glutarate 2-hydroxylase</fullName>
        <shortName evidence="1">G-2-H</shortName>
        <ecNumber evidence="1">1.14.11.64</ecNumber>
    </recommendedName>
</protein>
<comment type="function">
    <text evidence="1">Acts as an alpha-ketoglutarate-dependent dioxygenase catalyzing hydroxylation of glutarate (GA) to L-2-hydroxyglutarate (L2HG). Functions in a L-lysine degradation pathway that proceeds via cadaverine, glutarate and L-2-hydroxyglutarate.</text>
</comment>
<comment type="catalytic activity">
    <reaction evidence="1">
        <text>glutarate + 2-oxoglutarate + O2 = (S)-2-hydroxyglutarate + succinate + CO2</text>
        <dbReference type="Rhea" id="RHEA:13821"/>
        <dbReference type="ChEBI" id="CHEBI:15379"/>
        <dbReference type="ChEBI" id="CHEBI:16526"/>
        <dbReference type="ChEBI" id="CHEBI:16782"/>
        <dbReference type="ChEBI" id="CHEBI:16810"/>
        <dbReference type="ChEBI" id="CHEBI:30031"/>
        <dbReference type="ChEBI" id="CHEBI:30921"/>
        <dbReference type="EC" id="1.14.11.64"/>
    </reaction>
    <physiologicalReaction direction="left-to-right" evidence="1">
        <dbReference type="Rhea" id="RHEA:13822"/>
    </physiologicalReaction>
</comment>
<comment type="cofactor">
    <cofactor evidence="1">
        <name>Fe(2+)</name>
        <dbReference type="ChEBI" id="CHEBI:29033"/>
    </cofactor>
    <text evidence="1">Binds 1 Fe(2+) ion per subunit.</text>
</comment>
<comment type="pathway">
    <text evidence="1">Amino-acid degradation.</text>
</comment>
<comment type="subunit">
    <text evidence="1">Homotetramer.</text>
</comment>
<comment type="similarity">
    <text evidence="1">Belongs to the glutarate hydroxylase family.</text>
</comment>
<dbReference type="EC" id="1.14.11.64" evidence="1"/>
<dbReference type="EMBL" id="CP000886">
    <property type="protein sequence ID" value="ABX68812.1"/>
    <property type="molecule type" value="Genomic_DNA"/>
</dbReference>
<dbReference type="RefSeq" id="WP_000993100.1">
    <property type="nucleotide sequence ID" value="NC_010102.1"/>
</dbReference>
<dbReference type="SMR" id="A9N078"/>
<dbReference type="KEGG" id="spq:SPAB_03465"/>
<dbReference type="PATRIC" id="fig|1016998.12.peg.3266"/>
<dbReference type="HOGENOM" id="CLU_075277_0_0_6"/>
<dbReference type="Proteomes" id="UP000008556">
    <property type="component" value="Chromosome"/>
</dbReference>
<dbReference type="GO" id="GO:0008198">
    <property type="term" value="F:ferrous iron binding"/>
    <property type="evidence" value="ECO:0007669"/>
    <property type="project" value="UniProtKB-UniRule"/>
</dbReference>
<dbReference type="GO" id="GO:0106343">
    <property type="term" value="F:glutarate dioxygenase activity"/>
    <property type="evidence" value="ECO:0007669"/>
    <property type="project" value="UniProtKB-EC"/>
</dbReference>
<dbReference type="GO" id="GO:0050498">
    <property type="term" value="F:oxidoreductase activity, acting on paired donors, with incorporation or reduction of molecular oxygen, with 2-oxoglutarate as one donor, and the other dehydrogenated"/>
    <property type="evidence" value="ECO:0007669"/>
    <property type="project" value="UniProtKB-UniRule"/>
</dbReference>
<dbReference type="GO" id="GO:0019477">
    <property type="term" value="P:L-lysine catabolic process"/>
    <property type="evidence" value="ECO:0007669"/>
    <property type="project" value="UniProtKB-UniRule"/>
</dbReference>
<dbReference type="CDD" id="cd00250">
    <property type="entry name" value="CAS_like"/>
    <property type="match status" value="1"/>
</dbReference>
<dbReference type="FunFam" id="3.60.130.10:FF:000004">
    <property type="entry name" value="Glutarate 2-hydroxylase"/>
    <property type="match status" value="1"/>
</dbReference>
<dbReference type="Gene3D" id="3.60.130.10">
    <property type="entry name" value="Clavaminate synthase-like"/>
    <property type="match status" value="1"/>
</dbReference>
<dbReference type="HAMAP" id="MF_01083">
    <property type="entry name" value="glutarate_hydroxylase"/>
    <property type="match status" value="1"/>
</dbReference>
<dbReference type="InterPro" id="IPR015038">
    <property type="entry name" value="GlaH"/>
</dbReference>
<dbReference type="InterPro" id="IPR042098">
    <property type="entry name" value="TauD-like_sf"/>
</dbReference>
<dbReference type="NCBIfam" id="NF002814">
    <property type="entry name" value="PRK02963.1"/>
    <property type="match status" value="1"/>
</dbReference>
<dbReference type="Pfam" id="PF08943">
    <property type="entry name" value="CsiD"/>
    <property type="match status" value="1"/>
</dbReference>
<dbReference type="SUPFAM" id="SSF51197">
    <property type="entry name" value="Clavaminate synthase-like"/>
    <property type="match status" value="1"/>
</dbReference>
<name>GLAH_SALPB</name>
<reference key="1">
    <citation type="submission" date="2007-11" db="EMBL/GenBank/DDBJ databases">
        <authorList>
            <consortium name="The Salmonella enterica serovar Paratyphi B Genome Sequencing Project"/>
            <person name="McClelland M."/>
            <person name="Sanderson E.K."/>
            <person name="Porwollik S."/>
            <person name="Spieth J."/>
            <person name="Clifton W.S."/>
            <person name="Fulton R."/>
            <person name="Cordes M."/>
            <person name="Wollam A."/>
            <person name="Shah N."/>
            <person name="Pepin K."/>
            <person name="Bhonagiri V."/>
            <person name="Nash W."/>
            <person name="Johnson M."/>
            <person name="Thiruvilangam P."/>
            <person name="Wilson R."/>
        </authorList>
    </citation>
    <scope>NUCLEOTIDE SEQUENCE [LARGE SCALE GENOMIC DNA]</scope>
    <source>
        <strain>ATCC BAA-1250 / SPB7</strain>
    </source>
</reference>
<accession>A9N078</accession>
<proteinExistence type="inferred from homology"/>
<sequence>MNALTAVKANTDDLAQRHTGFTLAPSAQSPRLLALTFTADTTRQFLHQVAQWPVQALEYKSFLRFKIGKILDDLCGNQLQPLLIKTLLNRAQGALLISAEGIDDVAQAEEMVKLATAVAHLIGRSNYDAMSGQYYARFVVKNVDNSDSYLRQPHRVMELHNDGTYVEEVTDYVLMMKIDEQNMEGGNSLLLHLDDWEHLESFFTHPLARRVMRWAAPPSKNVSHDVWHPVFDVDQQGRPVMRYIDQFVQPKDFEEGVWLSELSDALETSQNILSVPVPVGKFLLINNLFWLHGRDRFTPHPDLRRELMRQRGYFAYAASHYQTHQ</sequence>
<gene>
    <name evidence="1" type="primary">glaH</name>
    <name type="ordered locus">SPAB_03465</name>
</gene>
<feature type="chain" id="PRO_1000084776" description="Glutarate 2-hydroxylase">
    <location>
        <begin position="1"/>
        <end position="325"/>
    </location>
</feature>
<feature type="binding site" evidence="1">
    <location>
        <position position="160"/>
    </location>
    <ligand>
        <name>Fe cation</name>
        <dbReference type="ChEBI" id="CHEBI:24875"/>
    </ligand>
</feature>
<feature type="binding site" evidence="1">
    <location>
        <position position="162"/>
    </location>
    <ligand>
        <name>Fe cation</name>
        <dbReference type="ChEBI" id="CHEBI:24875"/>
    </ligand>
</feature>
<feature type="binding site" evidence="1">
    <location>
        <position position="292"/>
    </location>
    <ligand>
        <name>Fe cation</name>
        <dbReference type="ChEBI" id="CHEBI:24875"/>
    </ligand>
</feature>